<feature type="initiator methionine" description="Removed" evidence="2">
    <location>
        <position position="1"/>
    </location>
</feature>
<feature type="chain" id="PRO_0000174916" description="10 kDa heat shock protein, mitochondrial">
    <location>
        <begin position="2"/>
        <end position="102"/>
    </location>
</feature>
<feature type="modified residue" description="N-acetylalanine" evidence="2">
    <location>
        <position position="2"/>
    </location>
</feature>
<feature type="modified residue" description="N6-acetyllysine" evidence="3">
    <location>
        <position position="8"/>
    </location>
</feature>
<feature type="modified residue" description="N6-succinyllysine" evidence="3">
    <location>
        <position position="28"/>
    </location>
</feature>
<feature type="modified residue" description="N6-acetyllysine; alternate" evidence="3">
    <location>
        <position position="40"/>
    </location>
</feature>
<feature type="modified residue" description="N6-malonyllysine; alternate" evidence="1">
    <location>
        <position position="40"/>
    </location>
</feature>
<feature type="modified residue" description="N6-succinyllysine; alternate" evidence="3">
    <location>
        <position position="40"/>
    </location>
</feature>
<feature type="modified residue" description="N6-malonyllysine; alternate" evidence="1">
    <location>
        <position position="54"/>
    </location>
</feature>
<feature type="modified residue" description="N6-succinyllysine; alternate" evidence="3">
    <location>
        <position position="54"/>
    </location>
</feature>
<feature type="modified residue" description="N6-acetyllysine; alternate" evidence="2">
    <location>
        <position position="56"/>
    </location>
</feature>
<feature type="modified residue" description="N6-malonyllysine; alternate" evidence="1">
    <location>
        <position position="56"/>
    </location>
</feature>
<feature type="modified residue" description="N6-succinyllysine; alternate" evidence="3">
    <location>
        <position position="56"/>
    </location>
</feature>
<feature type="modified residue" description="N6-acetyllysine; alternate" evidence="3">
    <location>
        <position position="66"/>
    </location>
</feature>
<feature type="modified residue" description="N6-succinyllysine; alternate" evidence="3">
    <location>
        <position position="66"/>
    </location>
</feature>
<feature type="modified residue" description="N6-acetyllysine; alternate" evidence="3">
    <location>
        <position position="70"/>
    </location>
</feature>
<feature type="modified residue" description="N6-succinyllysine; alternate" evidence="3">
    <location>
        <position position="70"/>
    </location>
</feature>
<feature type="modified residue" description="Phosphothreonine" evidence="2">
    <location>
        <position position="79"/>
    </location>
</feature>
<feature type="modified residue" description="N6-acetyllysine; alternate" evidence="3">
    <location>
        <position position="80"/>
    </location>
</feature>
<feature type="modified residue" description="N6-succinyllysine; alternate" evidence="3">
    <location>
        <position position="80"/>
    </location>
</feature>
<feature type="modified residue" description="N6-acetyllysine; alternate" evidence="2">
    <location>
        <position position="86"/>
    </location>
</feature>
<feature type="modified residue" description="N6-succinyllysine; alternate" evidence="3">
    <location>
        <position position="86"/>
    </location>
</feature>
<feature type="modified residue" description="N6-acetyllysine" evidence="2">
    <location>
        <position position="99"/>
    </location>
</feature>
<sequence>MAGQAFRKFLPLFDRVLVERSAAETVTKGGIMLPEKSQGKVLQATVVAVGSGSKGKGGEIQPVSVKVGDKVLLPEYGGTKVVLDDKDYFLFRDGDILGKYVD</sequence>
<reference key="1">
    <citation type="journal article" date="1993" name="DNA Seq.">
        <title>Complementary DNA sequence of bovine cpn10 (Hsp10), a chaperone protein from mitochondria.</title>
        <authorList>
            <person name="Pilkington S.J."/>
            <person name="Walker J.E."/>
        </authorList>
    </citation>
    <scope>NUCLEOTIDE SEQUENCE [MRNA]</scope>
    <source>
        <tissue>Heart</tissue>
    </source>
</reference>
<reference key="2">
    <citation type="submission" date="2005-08" db="EMBL/GenBank/DDBJ databases">
        <authorList>
            <consortium name="NIH - Mammalian Gene Collection (MGC) project"/>
        </authorList>
    </citation>
    <scope>NUCLEOTIDE SEQUENCE [LARGE SCALE MRNA]</scope>
    <source>
        <strain>Hereford</strain>
        <tissue>Testis</tissue>
    </source>
</reference>
<gene>
    <name type="primary">HSPE1</name>
</gene>
<accession>P61603</accession>
<accession>O95421</accession>
<accession>Q04984</accession>
<accession>Q3SZV9</accession>
<proteinExistence type="inferred from homology"/>
<evidence type="ECO:0000250" key="1"/>
<evidence type="ECO:0000250" key="2">
    <source>
        <dbReference type="UniProtKB" id="P61604"/>
    </source>
</evidence>
<evidence type="ECO:0000250" key="3">
    <source>
        <dbReference type="UniProtKB" id="Q64433"/>
    </source>
</evidence>
<evidence type="ECO:0000305" key="4"/>
<dbReference type="EMBL" id="X69556">
    <property type="protein sequence ID" value="CAA49288.1"/>
    <property type="molecule type" value="mRNA"/>
</dbReference>
<dbReference type="EMBL" id="BC102684">
    <property type="protein sequence ID" value="AAI02685.1"/>
    <property type="molecule type" value="mRNA"/>
</dbReference>
<dbReference type="PIR" id="A56682">
    <property type="entry name" value="A56682"/>
</dbReference>
<dbReference type="RefSeq" id="NP_776771.1">
    <property type="nucleotide sequence ID" value="NM_174346.2"/>
</dbReference>
<dbReference type="SMR" id="P61603"/>
<dbReference type="FunCoup" id="P61603">
    <property type="interactions" value="1957"/>
</dbReference>
<dbReference type="STRING" id="9913.ENSBTAP00000067449"/>
<dbReference type="PaxDb" id="9913-ENSBTAP00000016712"/>
<dbReference type="PeptideAtlas" id="P61603"/>
<dbReference type="GeneID" id="281833"/>
<dbReference type="KEGG" id="bta:281833"/>
<dbReference type="CTD" id="3336"/>
<dbReference type="VEuPathDB" id="HostDB:ENSBTAG00000012589"/>
<dbReference type="eggNOG" id="KOG1641">
    <property type="taxonomic scope" value="Eukaryota"/>
</dbReference>
<dbReference type="HOGENOM" id="CLU_132825_0_1_1"/>
<dbReference type="InParanoid" id="P61603"/>
<dbReference type="OMA" id="EDFLIMR"/>
<dbReference type="OrthoDB" id="9679147at2759"/>
<dbReference type="TreeFam" id="TF313814"/>
<dbReference type="Reactome" id="R-BTA-9013408">
    <property type="pathway name" value="RHOG GTPase cycle"/>
</dbReference>
<dbReference type="CD-CODE" id="D7FE2080">
    <property type="entry name" value="Nucleolus"/>
</dbReference>
<dbReference type="Proteomes" id="UP000009136">
    <property type="component" value="Chromosome 2"/>
</dbReference>
<dbReference type="Bgee" id="ENSBTAG00000012589">
    <property type="expression patterns" value="Expressed in oocyte and 105 other cell types or tissues"/>
</dbReference>
<dbReference type="GO" id="GO:0005759">
    <property type="term" value="C:mitochondrial matrix"/>
    <property type="evidence" value="ECO:0000318"/>
    <property type="project" value="GO_Central"/>
</dbReference>
<dbReference type="GO" id="GO:0005739">
    <property type="term" value="C:mitochondrion"/>
    <property type="evidence" value="ECO:0000250"/>
    <property type="project" value="UniProtKB"/>
</dbReference>
<dbReference type="GO" id="GO:0005524">
    <property type="term" value="F:ATP binding"/>
    <property type="evidence" value="ECO:0007669"/>
    <property type="project" value="InterPro"/>
</dbReference>
<dbReference type="GO" id="GO:0046872">
    <property type="term" value="F:metal ion binding"/>
    <property type="evidence" value="ECO:0000318"/>
    <property type="project" value="GO_Central"/>
</dbReference>
<dbReference type="GO" id="GO:0044183">
    <property type="term" value="F:protein folding chaperone"/>
    <property type="evidence" value="ECO:0007669"/>
    <property type="project" value="InterPro"/>
</dbReference>
<dbReference type="GO" id="GO:0051087">
    <property type="term" value="F:protein-folding chaperone binding"/>
    <property type="evidence" value="ECO:0000250"/>
    <property type="project" value="UniProtKB"/>
</dbReference>
<dbReference type="GO" id="GO:0051082">
    <property type="term" value="F:unfolded protein binding"/>
    <property type="evidence" value="ECO:0000318"/>
    <property type="project" value="GO_Central"/>
</dbReference>
<dbReference type="GO" id="GO:0051085">
    <property type="term" value="P:chaperone cofactor-dependent protein refolding"/>
    <property type="evidence" value="ECO:0000318"/>
    <property type="project" value="GO_Central"/>
</dbReference>
<dbReference type="CDD" id="cd00320">
    <property type="entry name" value="cpn10"/>
    <property type="match status" value="1"/>
</dbReference>
<dbReference type="FunFam" id="2.30.33.40:FF:000002">
    <property type="entry name" value="10 kDa chaperonin, mitochondrial"/>
    <property type="match status" value="1"/>
</dbReference>
<dbReference type="Gene3D" id="2.30.33.40">
    <property type="entry name" value="GroES chaperonin"/>
    <property type="match status" value="1"/>
</dbReference>
<dbReference type="HAMAP" id="MF_00580">
    <property type="entry name" value="CH10"/>
    <property type="match status" value="1"/>
</dbReference>
<dbReference type="InterPro" id="IPR020818">
    <property type="entry name" value="Chaperonin_GroES"/>
</dbReference>
<dbReference type="InterPro" id="IPR037124">
    <property type="entry name" value="Chaperonin_GroES_sf"/>
</dbReference>
<dbReference type="InterPro" id="IPR018369">
    <property type="entry name" value="Chaprnonin_Cpn10_CS"/>
</dbReference>
<dbReference type="InterPro" id="IPR011032">
    <property type="entry name" value="GroES-like_sf"/>
</dbReference>
<dbReference type="PANTHER" id="PTHR10772">
    <property type="entry name" value="10 KDA HEAT SHOCK PROTEIN"/>
    <property type="match status" value="1"/>
</dbReference>
<dbReference type="PANTHER" id="PTHR10772:SF0">
    <property type="entry name" value="10 KDA HEAT SHOCK PROTEIN, MITOCHONDRIAL"/>
    <property type="match status" value="1"/>
</dbReference>
<dbReference type="Pfam" id="PF00166">
    <property type="entry name" value="Cpn10"/>
    <property type="match status" value="1"/>
</dbReference>
<dbReference type="PRINTS" id="PR00297">
    <property type="entry name" value="CHAPERONIN10"/>
</dbReference>
<dbReference type="SMART" id="SM00883">
    <property type="entry name" value="Cpn10"/>
    <property type="match status" value="1"/>
</dbReference>
<dbReference type="SUPFAM" id="SSF50129">
    <property type="entry name" value="GroES-like"/>
    <property type="match status" value="1"/>
</dbReference>
<dbReference type="PROSITE" id="PS00681">
    <property type="entry name" value="CHAPERONINS_CPN10"/>
    <property type="match status" value="1"/>
</dbReference>
<comment type="function">
    <text evidence="2">Co-chaperonin implicated in mitochondrial protein import and macromolecular assembly. Together with Hsp60, facilitates the correct folding of imported proteins. May also prevent misfolding and promote the refolding and proper assembly of unfolded polypeptides generated under stress conditions in the mitochondrial matrix. The functional units of these chaperonins consist of heptameric rings of the large subunit Hsp60, which function as a back-to-back double ring. In a cyclic reaction, Hsp60 ring complexes bind one unfolded substrate protein per ring, followed by the binding of ATP and association with 2 heptameric rings of the co-chaperonin Hsp10. This leads to sequestration of the substrate protein in the inner cavity of Hsp60 where, for a certain period of time, it can fold undisturbed by other cell components. Synchronous hydrolysis of ATP in all Hsp60 subunits results in the dissociation of the chaperonin rings and the release of ADP and the folded substrate protein.</text>
</comment>
<comment type="subunit">
    <text evidence="2">Homoheptamer arranged in a ring structure. 2 heptameric Hsp10 rings interact with a Hsp60 tetradecamer in the structure of a back-to-back double heptameric ring to form the symmetrical football complex.</text>
</comment>
<comment type="subcellular location">
    <subcellularLocation>
        <location evidence="2">Mitochondrion matrix</location>
    </subcellularLocation>
</comment>
<comment type="induction">
    <text evidence="1">By stress.</text>
</comment>
<comment type="similarity">
    <text evidence="4">Belongs to the GroES chaperonin family.</text>
</comment>
<keyword id="KW-0007">Acetylation</keyword>
<keyword id="KW-0143">Chaperone</keyword>
<keyword id="KW-0496">Mitochondrion</keyword>
<keyword id="KW-0597">Phosphoprotein</keyword>
<keyword id="KW-1185">Reference proteome</keyword>
<keyword id="KW-0346">Stress response</keyword>
<name>CH10_BOVIN</name>
<protein>
    <recommendedName>
        <fullName>10 kDa heat shock protein, mitochondrial</fullName>
        <shortName>Hsp10</shortName>
    </recommendedName>
    <alternativeName>
        <fullName>10 kDa chaperonin</fullName>
    </alternativeName>
    <alternativeName>
        <fullName>Chaperonin 10</fullName>
        <shortName>CPN10</shortName>
    </alternativeName>
</protein>
<organism>
    <name type="scientific">Bos taurus</name>
    <name type="common">Bovine</name>
    <dbReference type="NCBI Taxonomy" id="9913"/>
    <lineage>
        <taxon>Eukaryota</taxon>
        <taxon>Metazoa</taxon>
        <taxon>Chordata</taxon>
        <taxon>Craniata</taxon>
        <taxon>Vertebrata</taxon>
        <taxon>Euteleostomi</taxon>
        <taxon>Mammalia</taxon>
        <taxon>Eutheria</taxon>
        <taxon>Laurasiatheria</taxon>
        <taxon>Artiodactyla</taxon>
        <taxon>Ruminantia</taxon>
        <taxon>Pecora</taxon>
        <taxon>Bovidae</taxon>
        <taxon>Bovinae</taxon>
        <taxon>Bos</taxon>
    </lineage>
</organism>